<accession>Q9KD71</accession>
<name>DNAJ_HALH5</name>
<organism>
    <name type="scientific">Halalkalibacterium halodurans (strain ATCC BAA-125 / DSM 18197 / FERM 7344 / JCM 9153 / C-125)</name>
    <name type="common">Bacillus halodurans</name>
    <dbReference type="NCBI Taxonomy" id="272558"/>
    <lineage>
        <taxon>Bacteria</taxon>
        <taxon>Bacillati</taxon>
        <taxon>Bacillota</taxon>
        <taxon>Bacilli</taxon>
        <taxon>Bacillales</taxon>
        <taxon>Bacillaceae</taxon>
        <taxon>Halalkalibacterium (ex Joshi et al. 2022)</taxon>
    </lineage>
</organism>
<gene>
    <name evidence="1" type="primary">dnaJ</name>
    <name type="ordered locus">BH1348</name>
</gene>
<proteinExistence type="inferred from homology"/>
<keyword id="KW-0143">Chaperone</keyword>
<keyword id="KW-0963">Cytoplasm</keyword>
<keyword id="KW-0235">DNA replication</keyword>
<keyword id="KW-0479">Metal-binding</keyword>
<keyword id="KW-1185">Reference proteome</keyword>
<keyword id="KW-0677">Repeat</keyword>
<keyword id="KW-0346">Stress response</keyword>
<keyword id="KW-0862">Zinc</keyword>
<keyword id="KW-0863">Zinc-finger</keyword>
<protein>
    <recommendedName>
        <fullName evidence="1">Chaperone protein DnaJ</fullName>
    </recommendedName>
</protein>
<sequence length="370" mass="40580">MSKRDYYEVLGVDRNASADEVKKAYRKLARKYHPDVNKAPDAEDKFKEVKEAFDTLSDPQKKAHYDQFGHTDPNQGFGGGGAGDFGGFSDIFDMFFGGGGGRRNPNAPRQGADLQYTMTLEFKEAVFGKETTIEIPREETCHTCSGSGAKPGTKPESCPHCGGSGQLNIEQNTPFGRVVNRRVCHHCEGTGKYIKHKCATCGGKGKVRKRKKINVKVPAGIDHGQQIRLSGQGEAGVNGGPAGDLYIVFNVKPHEFFERDGDDIYCEMPLTFVQVALGDEIEVPTLNGKVKLKIPAGTQTGTSFRLRGKGVPNVHGRGQGDQHVQVRVITPKQLSEKEKELLREFAQMSGGRPDEQDDSFFAKVKRAFKG</sequence>
<reference key="1">
    <citation type="journal article" date="2000" name="Nucleic Acids Res.">
        <title>Complete genome sequence of the alkaliphilic bacterium Bacillus halodurans and genomic sequence comparison with Bacillus subtilis.</title>
        <authorList>
            <person name="Takami H."/>
            <person name="Nakasone K."/>
            <person name="Takaki Y."/>
            <person name="Maeno G."/>
            <person name="Sasaki R."/>
            <person name="Masui N."/>
            <person name="Fuji F."/>
            <person name="Hirama C."/>
            <person name="Nakamura Y."/>
            <person name="Ogasawara N."/>
            <person name="Kuhara S."/>
            <person name="Horikoshi K."/>
        </authorList>
    </citation>
    <scope>NUCLEOTIDE SEQUENCE [LARGE SCALE GENOMIC DNA]</scope>
    <source>
        <strain>ATCC BAA-125 / DSM 18197 / FERM 7344 / JCM 9153 / C-125</strain>
    </source>
</reference>
<evidence type="ECO:0000255" key="1">
    <source>
        <dbReference type="HAMAP-Rule" id="MF_01152"/>
    </source>
</evidence>
<dbReference type="EMBL" id="BA000004">
    <property type="protein sequence ID" value="BAB05067.1"/>
    <property type="molecule type" value="Genomic_DNA"/>
</dbReference>
<dbReference type="PIR" id="D83818">
    <property type="entry name" value="D83818"/>
</dbReference>
<dbReference type="RefSeq" id="WP_010897513.1">
    <property type="nucleotide sequence ID" value="NC_002570.2"/>
</dbReference>
<dbReference type="SMR" id="Q9KD71"/>
<dbReference type="STRING" id="272558.gene:10727242"/>
<dbReference type="KEGG" id="bha:BH1348"/>
<dbReference type="eggNOG" id="COG0484">
    <property type="taxonomic scope" value="Bacteria"/>
</dbReference>
<dbReference type="HOGENOM" id="CLU_017633_0_7_9"/>
<dbReference type="OrthoDB" id="9779889at2"/>
<dbReference type="Proteomes" id="UP000001258">
    <property type="component" value="Chromosome"/>
</dbReference>
<dbReference type="GO" id="GO:0005737">
    <property type="term" value="C:cytoplasm"/>
    <property type="evidence" value="ECO:0007669"/>
    <property type="project" value="UniProtKB-SubCell"/>
</dbReference>
<dbReference type="GO" id="GO:0005524">
    <property type="term" value="F:ATP binding"/>
    <property type="evidence" value="ECO:0007669"/>
    <property type="project" value="InterPro"/>
</dbReference>
<dbReference type="GO" id="GO:0031072">
    <property type="term" value="F:heat shock protein binding"/>
    <property type="evidence" value="ECO:0007669"/>
    <property type="project" value="InterPro"/>
</dbReference>
<dbReference type="GO" id="GO:0051082">
    <property type="term" value="F:unfolded protein binding"/>
    <property type="evidence" value="ECO:0007669"/>
    <property type="project" value="UniProtKB-UniRule"/>
</dbReference>
<dbReference type="GO" id="GO:0008270">
    <property type="term" value="F:zinc ion binding"/>
    <property type="evidence" value="ECO:0007669"/>
    <property type="project" value="UniProtKB-UniRule"/>
</dbReference>
<dbReference type="GO" id="GO:0051085">
    <property type="term" value="P:chaperone cofactor-dependent protein refolding"/>
    <property type="evidence" value="ECO:0007669"/>
    <property type="project" value="TreeGrafter"/>
</dbReference>
<dbReference type="GO" id="GO:0006260">
    <property type="term" value="P:DNA replication"/>
    <property type="evidence" value="ECO:0007669"/>
    <property type="project" value="UniProtKB-KW"/>
</dbReference>
<dbReference type="GO" id="GO:0042026">
    <property type="term" value="P:protein refolding"/>
    <property type="evidence" value="ECO:0007669"/>
    <property type="project" value="TreeGrafter"/>
</dbReference>
<dbReference type="GO" id="GO:0009408">
    <property type="term" value="P:response to heat"/>
    <property type="evidence" value="ECO:0007669"/>
    <property type="project" value="InterPro"/>
</dbReference>
<dbReference type="CDD" id="cd06257">
    <property type="entry name" value="DnaJ"/>
    <property type="match status" value="1"/>
</dbReference>
<dbReference type="CDD" id="cd10747">
    <property type="entry name" value="DnaJ_C"/>
    <property type="match status" value="1"/>
</dbReference>
<dbReference type="CDD" id="cd10719">
    <property type="entry name" value="DnaJ_zf"/>
    <property type="match status" value="1"/>
</dbReference>
<dbReference type="FunFam" id="1.10.287.110:FF:000031">
    <property type="entry name" value="Molecular chaperone DnaJ"/>
    <property type="match status" value="1"/>
</dbReference>
<dbReference type="FunFam" id="2.10.230.10:FF:000002">
    <property type="entry name" value="Molecular chaperone DnaJ"/>
    <property type="match status" value="1"/>
</dbReference>
<dbReference type="FunFam" id="2.60.260.20:FF:000004">
    <property type="entry name" value="Molecular chaperone DnaJ"/>
    <property type="match status" value="1"/>
</dbReference>
<dbReference type="FunFam" id="2.60.260.20:FF:000009">
    <property type="entry name" value="Putative Mitochondrial DnaJ chaperone"/>
    <property type="match status" value="1"/>
</dbReference>
<dbReference type="Gene3D" id="1.10.287.110">
    <property type="entry name" value="DnaJ domain"/>
    <property type="match status" value="1"/>
</dbReference>
<dbReference type="Gene3D" id="2.10.230.10">
    <property type="entry name" value="Heat shock protein DnaJ, cysteine-rich domain"/>
    <property type="match status" value="1"/>
</dbReference>
<dbReference type="Gene3D" id="2.60.260.20">
    <property type="entry name" value="Urease metallochaperone UreE, N-terminal domain"/>
    <property type="match status" value="2"/>
</dbReference>
<dbReference type="HAMAP" id="MF_01152">
    <property type="entry name" value="DnaJ"/>
    <property type="match status" value="1"/>
</dbReference>
<dbReference type="InterPro" id="IPR012724">
    <property type="entry name" value="DnaJ"/>
</dbReference>
<dbReference type="InterPro" id="IPR002939">
    <property type="entry name" value="DnaJ_C"/>
</dbReference>
<dbReference type="InterPro" id="IPR001623">
    <property type="entry name" value="DnaJ_domain"/>
</dbReference>
<dbReference type="InterPro" id="IPR018253">
    <property type="entry name" value="DnaJ_domain_CS"/>
</dbReference>
<dbReference type="InterPro" id="IPR008971">
    <property type="entry name" value="HSP40/DnaJ_pept-bd"/>
</dbReference>
<dbReference type="InterPro" id="IPR001305">
    <property type="entry name" value="HSP_DnaJ_Cys-rich_dom"/>
</dbReference>
<dbReference type="InterPro" id="IPR036410">
    <property type="entry name" value="HSP_DnaJ_Cys-rich_dom_sf"/>
</dbReference>
<dbReference type="InterPro" id="IPR036869">
    <property type="entry name" value="J_dom_sf"/>
</dbReference>
<dbReference type="NCBIfam" id="TIGR02349">
    <property type="entry name" value="DnaJ_bact"/>
    <property type="match status" value="1"/>
</dbReference>
<dbReference type="NCBIfam" id="NF008035">
    <property type="entry name" value="PRK10767.1"/>
    <property type="match status" value="1"/>
</dbReference>
<dbReference type="NCBIfam" id="NF010869">
    <property type="entry name" value="PRK14276.1"/>
    <property type="match status" value="1"/>
</dbReference>
<dbReference type="NCBIfam" id="NF010873">
    <property type="entry name" value="PRK14280.1"/>
    <property type="match status" value="1"/>
</dbReference>
<dbReference type="NCBIfam" id="NF010880">
    <property type="entry name" value="PRK14287.1"/>
    <property type="match status" value="1"/>
</dbReference>
<dbReference type="PANTHER" id="PTHR43096:SF48">
    <property type="entry name" value="CHAPERONE PROTEIN DNAJ"/>
    <property type="match status" value="1"/>
</dbReference>
<dbReference type="PANTHER" id="PTHR43096">
    <property type="entry name" value="DNAJ HOMOLOG 1, MITOCHONDRIAL-RELATED"/>
    <property type="match status" value="1"/>
</dbReference>
<dbReference type="Pfam" id="PF00226">
    <property type="entry name" value="DnaJ"/>
    <property type="match status" value="1"/>
</dbReference>
<dbReference type="Pfam" id="PF01556">
    <property type="entry name" value="DnaJ_C"/>
    <property type="match status" value="1"/>
</dbReference>
<dbReference type="Pfam" id="PF00684">
    <property type="entry name" value="DnaJ_CXXCXGXG"/>
    <property type="match status" value="1"/>
</dbReference>
<dbReference type="PRINTS" id="PR00625">
    <property type="entry name" value="JDOMAIN"/>
</dbReference>
<dbReference type="SMART" id="SM00271">
    <property type="entry name" value="DnaJ"/>
    <property type="match status" value="1"/>
</dbReference>
<dbReference type="SUPFAM" id="SSF46565">
    <property type="entry name" value="Chaperone J-domain"/>
    <property type="match status" value="1"/>
</dbReference>
<dbReference type="SUPFAM" id="SSF57938">
    <property type="entry name" value="DnaJ/Hsp40 cysteine-rich domain"/>
    <property type="match status" value="1"/>
</dbReference>
<dbReference type="SUPFAM" id="SSF49493">
    <property type="entry name" value="HSP40/DnaJ peptide-binding domain"/>
    <property type="match status" value="2"/>
</dbReference>
<dbReference type="PROSITE" id="PS00636">
    <property type="entry name" value="DNAJ_1"/>
    <property type="match status" value="1"/>
</dbReference>
<dbReference type="PROSITE" id="PS50076">
    <property type="entry name" value="DNAJ_2"/>
    <property type="match status" value="1"/>
</dbReference>
<dbReference type="PROSITE" id="PS51188">
    <property type="entry name" value="ZF_CR"/>
    <property type="match status" value="1"/>
</dbReference>
<comment type="function">
    <text evidence="1">Participates actively in the response to hyperosmotic and heat shock by preventing the aggregation of stress-denatured proteins and by disaggregating proteins, also in an autonomous, DnaK-independent fashion. Unfolded proteins bind initially to DnaJ; upon interaction with the DnaJ-bound protein, DnaK hydrolyzes its bound ATP, resulting in the formation of a stable complex. GrpE releases ADP from DnaK; ATP binding to DnaK triggers the release of the substrate protein, thus completing the reaction cycle. Several rounds of ATP-dependent interactions between DnaJ, DnaK and GrpE are required for fully efficient folding. Also involved, together with DnaK and GrpE, in the DNA replication of plasmids through activation of initiation proteins.</text>
</comment>
<comment type="cofactor">
    <cofactor evidence="1">
        <name>Zn(2+)</name>
        <dbReference type="ChEBI" id="CHEBI:29105"/>
    </cofactor>
    <text evidence="1">Binds 2 Zn(2+) ions per monomer.</text>
</comment>
<comment type="subunit">
    <text evidence="1">Homodimer.</text>
</comment>
<comment type="subcellular location">
    <subcellularLocation>
        <location evidence="1">Cytoplasm</location>
    </subcellularLocation>
</comment>
<comment type="domain">
    <text evidence="1">The J domain is necessary and sufficient to stimulate DnaK ATPase activity. Zinc center 1 plays an important role in the autonomous, DnaK-independent chaperone activity of DnaJ. Zinc center 2 is essential for interaction with DnaK and for DnaJ activity.</text>
</comment>
<comment type="similarity">
    <text evidence="1">Belongs to the DnaJ family.</text>
</comment>
<feature type="chain" id="PRO_0000070721" description="Chaperone protein DnaJ">
    <location>
        <begin position="1"/>
        <end position="370"/>
    </location>
</feature>
<feature type="domain" description="J" evidence="1">
    <location>
        <begin position="5"/>
        <end position="69"/>
    </location>
</feature>
<feature type="repeat" description="CXXCXGXG motif">
    <location>
        <begin position="141"/>
        <end position="148"/>
    </location>
</feature>
<feature type="repeat" description="CXXCXGXG motif">
    <location>
        <begin position="158"/>
        <end position="165"/>
    </location>
</feature>
<feature type="repeat" description="CXXCXGXG motif">
    <location>
        <begin position="184"/>
        <end position="191"/>
    </location>
</feature>
<feature type="repeat" description="CXXCXGXG motif">
    <location>
        <begin position="198"/>
        <end position="205"/>
    </location>
</feature>
<feature type="zinc finger region" description="CR-type" evidence="1">
    <location>
        <begin position="128"/>
        <end position="210"/>
    </location>
</feature>
<feature type="binding site" evidence="1">
    <location>
        <position position="141"/>
    </location>
    <ligand>
        <name>Zn(2+)</name>
        <dbReference type="ChEBI" id="CHEBI:29105"/>
        <label>1</label>
    </ligand>
</feature>
<feature type="binding site" evidence="1">
    <location>
        <position position="144"/>
    </location>
    <ligand>
        <name>Zn(2+)</name>
        <dbReference type="ChEBI" id="CHEBI:29105"/>
        <label>1</label>
    </ligand>
</feature>
<feature type="binding site" evidence="1">
    <location>
        <position position="158"/>
    </location>
    <ligand>
        <name>Zn(2+)</name>
        <dbReference type="ChEBI" id="CHEBI:29105"/>
        <label>2</label>
    </ligand>
</feature>
<feature type="binding site" evidence="1">
    <location>
        <position position="161"/>
    </location>
    <ligand>
        <name>Zn(2+)</name>
        <dbReference type="ChEBI" id="CHEBI:29105"/>
        <label>2</label>
    </ligand>
</feature>
<feature type="binding site" evidence="1">
    <location>
        <position position="184"/>
    </location>
    <ligand>
        <name>Zn(2+)</name>
        <dbReference type="ChEBI" id="CHEBI:29105"/>
        <label>2</label>
    </ligand>
</feature>
<feature type="binding site" evidence="1">
    <location>
        <position position="187"/>
    </location>
    <ligand>
        <name>Zn(2+)</name>
        <dbReference type="ChEBI" id="CHEBI:29105"/>
        <label>2</label>
    </ligand>
</feature>
<feature type="binding site" evidence="1">
    <location>
        <position position="198"/>
    </location>
    <ligand>
        <name>Zn(2+)</name>
        <dbReference type="ChEBI" id="CHEBI:29105"/>
        <label>1</label>
    </ligand>
</feature>
<feature type="binding site" evidence="1">
    <location>
        <position position="201"/>
    </location>
    <ligand>
        <name>Zn(2+)</name>
        <dbReference type="ChEBI" id="CHEBI:29105"/>
        <label>1</label>
    </ligand>
</feature>